<organism>
    <name type="scientific">Arabidopsis thaliana</name>
    <name type="common">Mouse-ear cress</name>
    <dbReference type="NCBI Taxonomy" id="3702"/>
    <lineage>
        <taxon>Eukaryota</taxon>
        <taxon>Viridiplantae</taxon>
        <taxon>Streptophyta</taxon>
        <taxon>Embryophyta</taxon>
        <taxon>Tracheophyta</taxon>
        <taxon>Spermatophyta</taxon>
        <taxon>Magnoliopsida</taxon>
        <taxon>eudicotyledons</taxon>
        <taxon>Gunneridae</taxon>
        <taxon>Pentapetalae</taxon>
        <taxon>rosids</taxon>
        <taxon>malvids</taxon>
        <taxon>Brassicales</taxon>
        <taxon>Brassicaceae</taxon>
        <taxon>Camelineae</taxon>
        <taxon>Arabidopsis</taxon>
    </lineage>
</organism>
<accession>Q96286</accession>
<accession>B9DFT1</accession>
<accession>Q96531</accession>
<accession>Q9M893</accession>
<comment type="function">
    <text evidence="3">Essential for biosynthesis of the polyamines spermidine and spermine. Essential for polyamine homeostasis, and normal plant embryogenesis, growth and development.</text>
</comment>
<comment type="catalytic activity">
    <reaction evidence="2">
        <text>S-adenosyl-L-methionine + H(+) = S-adenosyl 3-(methylsulfanyl)propylamine + CO2</text>
        <dbReference type="Rhea" id="RHEA:15981"/>
        <dbReference type="ChEBI" id="CHEBI:15378"/>
        <dbReference type="ChEBI" id="CHEBI:16526"/>
        <dbReference type="ChEBI" id="CHEBI:57443"/>
        <dbReference type="ChEBI" id="CHEBI:59789"/>
        <dbReference type="EC" id="4.1.1.50"/>
    </reaction>
</comment>
<comment type="cofactor">
    <cofactor evidence="1">
        <name>pyruvate</name>
        <dbReference type="ChEBI" id="CHEBI:15361"/>
    </cofactor>
    <text evidence="1">Binds 1 pyruvoyl group covalently per subunit.</text>
</comment>
<comment type="biophysicochemical properties">
    <kinetics>
        <KM evidence="2">23.1 uM for S-adenosyl-L-methionine</KM>
    </kinetics>
    <phDependence>
        <text evidence="2">Optimum pH is 6.8-7.2.</text>
    </phDependence>
</comment>
<comment type="pathway">
    <text evidence="7">Amine and polyamine biosynthesis; S-adenosylmethioninamine biosynthesis; S-adenosylmethioninamine from S-adenosyl-L-methionine: step 1/1.</text>
</comment>
<comment type="induction">
    <text evidence="4">Down-regulated by auxin.</text>
</comment>
<comment type="PTM">
    <text evidence="1">Is synthesized initially as an inactive proenzyme. Formation of the active enzyme involves a self-maturation process in which the active site pyruvoyl group is generated from an internal serine residue via an autocatalytic post-translational modification. Two non-identical subunits are generated from the proenzyme in this reaction, and the pyruvate is formed at the N-terminus of the alpha chain, which is derived from the carboxyl end of the proenzyme. The post-translation cleavage follows an unusual pathway, termed non-hydrolytic serinolysis, in which the side chain hydroxyl group of the serine supplies its oxygen atom to form the C-terminus of the beta chain, while the remainder of the serine residue undergoes an oxidative deamination to produce ammonia and the pyruvoyl group blocking the N-terminus of the alpha chain.</text>
</comment>
<comment type="disruption phenotype">
    <text evidence="3">Reduction in the length of stem internodes. Increased thickness of veins in leaves and inflorescence stems. Altered morphology of xylem vessel elements. The double mutants of bud2-1 and samdc1-1 are embryonic lethal.</text>
</comment>
<comment type="similarity">
    <text evidence="7">Belongs to the eukaryotic AdoMetDC family.</text>
</comment>
<evidence type="ECO:0000250" key="1">
    <source>
        <dbReference type="UniProtKB" id="P17707"/>
    </source>
</evidence>
<evidence type="ECO:0000269" key="2">
    <source>
    </source>
</evidence>
<evidence type="ECO:0000269" key="3">
    <source>
    </source>
</evidence>
<evidence type="ECO:0000269" key="4">
    <source>
    </source>
</evidence>
<evidence type="ECO:0000303" key="5">
    <source>
    </source>
</evidence>
<evidence type="ECO:0000303" key="6">
    <source>
    </source>
</evidence>
<evidence type="ECO:0000305" key="7"/>
<reference key="1">
    <citation type="journal article" date="2001" name="Biochem. J.">
        <title>Characterization of monocot and dicot plant S-adenosyl-L-methionine decarboxylase gene families including identification in the mRNA of a highly conserved pair of upstream overlapping open reading frames.</title>
        <authorList>
            <person name="Franceschetti M."/>
            <person name="Hanfrey C."/>
            <person name="Scaramagli S."/>
            <person name="Torrigiani P."/>
            <person name="Bagni N."/>
            <person name="Michael A.J."/>
        </authorList>
    </citation>
    <scope>NUCLEOTIDE SEQUENCE [GENOMIC DNA]</scope>
    <source>
        <strain>cv. Columbia</strain>
    </source>
</reference>
<reference key="2">
    <citation type="submission" date="1996-08" db="EMBL/GenBank/DDBJ databases">
        <title>Arabidopsis S-adenosylmethionine decarboxylase.</title>
        <authorList>
            <person name="Carrasco P."/>
            <person name="Marco F."/>
        </authorList>
    </citation>
    <scope>NUCLEOTIDE SEQUENCE [MRNA]</scope>
    <source>
        <strain>cv. Columbia</strain>
    </source>
</reference>
<reference key="3">
    <citation type="journal article" date="2000" name="Nature">
        <title>Sequence and analysis of chromosome 3 of the plant Arabidopsis thaliana.</title>
        <authorList>
            <person name="Salanoubat M."/>
            <person name="Lemcke K."/>
            <person name="Rieger M."/>
            <person name="Ansorge W."/>
            <person name="Unseld M."/>
            <person name="Fartmann B."/>
            <person name="Valle G."/>
            <person name="Bloecker H."/>
            <person name="Perez-Alonso M."/>
            <person name="Obermaier B."/>
            <person name="Delseny M."/>
            <person name="Boutry M."/>
            <person name="Grivell L.A."/>
            <person name="Mache R."/>
            <person name="Puigdomenech P."/>
            <person name="De Simone V."/>
            <person name="Choisne N."/>
            <person name="Artiguenave F."/>
            <person name="Robert C."/>
            <person name="Brottier P."/>
            <person name="Wincker P."/>
            <person name="Cattolico L."/>
            <person name="Weissenbach J."/>
            <person name="Saurin W."/>
            <person name="Quetier F."/>
            <person name="Schaefer M."/>
            <person name="Mueller-Auer S."/>
            <person name="Gabel C."/>
            <person name="Fuchs M."/>
            <person name="Benes V."/>
            <person name="Wurmbach E."/>
            <person name="Drzonek H."/>
            <person name="Erfle H."/>
            <person name="Jordan N."/>
            <person name="Bangert S."/>
            <person name="Wiedelmann R."/>
            <person name="Kranz H."/>
            <person name="Voss H."/>
            <person name="Holland R."/>
            <person name="Brandt P."/>
            <person name="Nyakatura G."/>
            <person name="Vezzi A."/>
            <person name="D'Angelo M."/>
            <person name="Pallavicini A."/>
            <person name="Toppo S."/>
            <person name="Simionati B."/>
            <person name="Conrad A."/>
            <person name="Hornischer K."/>
            <person name="Kauer G."/>
            <person name="Loehnert T.-H."/>
            <person name="Nordsiek G."/>
            <person name="Reichelt J."/>
            <person name="Scharfe M."/>
            <person name="Schoen O."/>
            <person name="Bargues M."/>
            <person name="Terol J."/>
            <person name="Climent J."/>
            <person name="Navarro P."/>
            <person name="Collado C."/>
            <person name="Perez-Perez A."/>
            <person name="Ottenwaelder B."/>
            <person name="Duchemin D."/>
            <person name="Cooke R."/>
            <person name="Laudie M."/>
            <person name="Berger-Llauro C."/>
            <person name="Purnelle B."/>
            <person name="Masuy D."/>
            <person name="de Haan M."/>
            <person name="Maarse A.C."/>
            <person name="Alcaraz J.-P."/>
            <person name="Cottet A."/>
            <person name="Casacuberta E."/>
            <person name="Monfort A."/>
            <person name="Argiriou A."/>
            <person name="Flores M."/>
            <person name="Liguori R."/>
            <person name="Vitale D."/>
            <person name="Mannhaupt G."/>
            <person name="Haase D."/>
            <person name="Schoof H."/>
            <person name="Rudd S."/>
            <person name="Zaccaria P."/>
            <person name="Mewes H.-W."/>
            <person name="Mayer K.F.X."/>
            <person name="Kaul S."/>
            <person name="Town C.D."/>
            <person name="Koo H.L."/>
            <person name="Tallon L.J."/>
            <person name="Jenkins J."/>
            <person name="Rooney T."/>
            <person name="Rizzo M."/>
            <person name="Walts A."/>
            <person name="Utterback T."/>
            <person name="Fujii C.Y."/>
            <person name="Shea T.P."/>
            <person name="Creasy T.H."/>
            <person name="Haas B."/>
            <person name="Maiti R."/>
            <person name="Wu D."/>
            <person name="Peterson J."/>
            <person name="Van Aken S."/>
            <person name="Pai G."/>
            <person name="Militscher J."/>
            <person name="Sellers P."/>
            <person name="Gill J.E."/>
            <person name="Feldblyum T.V."/>
            <person name="Preuss D."/>
            <person name="Lin X."/>
            <person name="Nierman W.C."/>
            <person name="Salzberg S.L."/>
            <person name="White O."/>
            <person name="Venter J.C."/>
            <person name="Fraser C.M."/>
            <person name="Kaneko T."/>
            <person name="Nakamura Y."/>
            <person name="Sato S."/>
            <person name="Kato T."/>
            <person name="Asamizu E."/>
            <person name="Sasamoto S."/>
            <person name="Kimura T."/>
            <person name="Idesawa K."/>
            <person name="Kawashima K."/>
            <person name="Kishida Y."/>
            <person name="Kiyokawa C."/>
            <person name="Kohara M."/>
            <person name="Matsumoto M."/>
            <person name="Matsuno A."/>
            <person name="Muraki A."/>
            <person name="Nakayama S."/>
            <person name="Nakazaki N."/>
            <person name="Shinpo S."/>
            <person name="Takeuchi C."/>
            <person name="Wada T."/>
            <person name="Watanabe A."/>
            <person name="Yamada M."/>
            <person name="Yasuda M."/>
            <person name="Tabata S."/>
        </authorList>
    </citation>
    <scope>NUCLEOTIDE SEQUENCE [LARGE SCALE GENOMIC DNA]</scope>
    <source>
        <strain>cv. Columbia</strain>
    </source>
</reference>
<reference key="4">
    <citation type="journal article" date="2017" name="Plant J.">
        <title>Araport11: a complete reannotation of the Arabidopsis thaliana reference genome.</title>
        <authorList>
            <person name="Cheng C.Y."/>
            <person name="Krishnakumar V."/>
            <person name="Chan A.P."/>
            <person name="Thibaud-Nissen F."/>
            <person name="Schobel S."/>
            <person name="Town C.D."/>
        </authorList>
    </citation>
    <scope>GENOME REANNOTATION</scope>
    <source>
        <strain>cv. Columbia</strain>
    </source>
</reference>
<reference key="5">
    <citation type="journal article" date="2003" name="Science">
        <title>Empirical analysis of transcriptional activity in the Arabidopsis genome.</title>
        <authorList>
            <person name="Yamada K."/>
            <person name="Lim J."/>
            <person name="Dale J.M."/>
            <person name="Chen H."/>
            <person name="Shinn P."/>
            <person name="Palm C.J."/>
            <person name="Southwick A.M."/>
            <person name="Wu H.C."/>
            <person name="Kim C.J."/>
            <person name="Nguyen M."/>
            <person name="Pham P.K."/>
            <person name="Cheuk R.F."/>
            <person name="Karlin-Newmann G."/>
            <person name="Liu S.X."/>
            <person name="Lam B."/>
            <person name="Sakano H."/>
            <person name="Wu T."/>
            <person name="Yu G."/>
            <person name="Miranda M."/>
            <person name="Quach H.L."/>
            <person name="Tripp M."/>
            <person name="Chang C.H."/>
            <person name="Lee J.M."/>
            <person name="Toriumi M.J."/>
            <person name="Chan M.M."/>
            <person name="Tang C.C."/>
            <person name="Onodera C.S."/>
            <person name="Deng J.M."/>
            <person name="Akiyama K."/>
            <person name="Ansari Y."/>
            <person name="Arakawa T."/>
            <person name="Banh J."/>
            <person name="Banno F."/>
            <person name="Bowser L."/>
            <person name="Brooks S.Y."/>
            <person name="Carninci P."/>
            <person name="Chao Q."/>
            <person name="Choy N."/>
            <person name="Enju A."/>
            <person name="Goldsmith A.D."/>
            <person name="Gurjal M."/>
            <person name="Hansen N.F."/>
            <person name="Hayashizaki Y."/>
            <person name="Johnson-Hopson C."/>
            <person name="Hsuan V.W."/>
            <person name="Iida K."/>
            <person name="Karnes M."/>
            <person name="Khan S."/>
            <person name="Koesema E."/>
            <person name="Ishida J."/>
            <person name="Jiang P.X."/>
            <person name="Jones T."/>
            <person name="Kawai J."/>
            <person name="Kamiya A."/>
            <person name="Meyers C."/>
            <person name="Nakajima M."/>
            <person name="Narusaka M."/>
            <person name="Seki M."/>
            <person name="Sakurai T."/>
            <person name="Satou M."/>
            <person name="Tamse R."/>
            <person name="Vaysberg M."/>
            <person name="Wallender E.K."/>
            <person name="Wong C."/>
            <person name="Yamamura Y."/>
            <person name="Yuan S."/>
            <person name="Shinozaki K."/>
            <person name="Davis R.W."/>
            <person name="Theologis A."/>
            <person name="Ecker J.R."/>
        </authorList>
    </citation>
    <scope>NUCLEOTIDE SEQUENCE [LARGE SCALE MRNA]</scope>
    <source>
        <strain>cv. Columbia</strain>
    </source>
</reference>
<reference key="6">
    <citation type="journal article" date="2009" name="DNA Res.">
        <title>Analysis of multiple occurrences of alternative splicing events in Arabidopsis thaliana using novel sequenced full-length cDNAs.</title>
        <authorList>
            <person name="Iida K."/>
            <person name="Fukami-Kobayashi K."/>
            <person name="Toyoda A."/>
            <person name="Sakaki Y."/>
            <person name="Kobayashi M."/>
            <person name="Seki M."/>
            <person name="Shinozaki K."/>
        </authorList>
    </citation>
    <scope>NUCLEOTIDE SEQUENCE [LARGE SCALE MRNA]</scope>
    <source>
        <strain>cv. Columbia</strain>
    </source>
</reference>
<reference key="7">
    <citation type="journal article" date="1999" name="J. Biochem.">
        <title>Identification of functionally important residues of Arabidopsis thaliana S-adenosylmethionine decarboxylase.</title>
        <authorList>
            <person name="Park S.J."/>
            <person name="Cho Y.D."/>
        </authorList>
    </citation>
    <scope>CATALYTIC ACTIVITY</scope>
    <scope>BIOPHYSICOCHEMICAL PROPERTIES</scope>
    <scope>MUTAGENESIS OF CYS-50; LYS-81; CYS-83 AND CYS-230</scope>
</reference>
<reference key="8">
    <citation type="journal article" date="2006" name="Cell Res.">
        <title>BUD2, encoding an S-adenosylmethionine decarboxylase, is required for Arabidopsis growth and development.</title>
        <authorList>
            <person name="Ge C."/>
            <person name="Cui X."/>
            <person name="Wang Y."/>
            <person name="Hu Y."/>
            <person name="Fu Z."/>
            <person name="Zhang D."/>
            <person name="Cheng Z."/>
            <person name="Li J."/>
        </authorList>
    </citation>
    <scope>FUNCTION</scope>
    <scope>DISRUPTION PHENOTYPE</scope>
    <scope>GENE FAMILY</scope>
</reference>
<reference key="9">
    <citation type="journal article" date="2010" name="Cell Res.">
        <title>The BUD2 mutation affects plant architecture through altering cytokinin and auxin responses in Arabidopsis.</title>
        <authorList>
            <person name="Cui X."/>
            <person name="Ge C."/>
            <person name="Wang R."/>
            <person name="Wang H."/>
            <person name="Chen W."/>
            <person name="Fu Z."/>
            <person name="Jiang X."/>
            <person name="Li J."/>
            <person name="Wang Y."/>
        </authorList>
    </citation>
    <scope>INDUCTION</scope>
</reference>
<proteinExistence type="evidence at protein level"/>
<gene>
    <name evidence="6" type="primary">SAMDC1</name>
    <name evidence="5" type="synonym">SAMDC</name>
    <name type="ordered locus">At3g02470</name>
    <name type="ORF">F16B3.10</name>
</gene>
<keyword id="KW-0068">Autocatalytic cleavage</keyword>
<keyword id="KW-0210">Decarboxylase</keyword>
<keyword id="KW-0456">Lyase</keyword>
<keyword id="KW-0620">Polyamine biosynthesis</keyword>
<keyword id="KW-0670">Pyruvate</keyword>
<keyword id="KW-1185">Reference proteome</keyword>
<keyword id="KW-0949">S-adenosyl-L-methionine</keyword>
<keyword id="KW-0704">Schiff base</keyword>
<keyword id="KW-0745">Spermidine biosynthesis</keyword>
<keyword id="KW-0865">Zymogen</keyword>
<dbReference type="EC" id="4.1.1.50" evidence="2"/>
<dbReference type="EMBL" id="Y07765">
    <property type="protein sequence ID" value="CAA69073.1"/>
    <property type="molecule type" value="Genomic_DNA"/>
</dbReference>
<dbReference type="EMBL" id="U63633">
    <property type="protein sequence ID" value="AAB17665.1"/>
    <property type="molecule type" value="mRNA"/>
</dbReference>
<dbReference type="EMBL" id="AC021640">
    <property type="protein sequence ID" value="AAF32454.1"/>
    <property type="molecule type" value="Genomic_DNA"/>
</dbReference>
<dbReference type="EMBL" id="CP002686">
    <property type="protein sequence ID" value="AEE73812.1"/>
    <property type="molecule type" value="Genomic_DNA"/>
</dbReference>
<dbReference type="EMBL" id="CP002686">
    <property type="protein sequence ID" value="AEE73813.1"/>
    <property type="molecule type" value="Genomic_DNA"/>
</dbReference>
<dbReference type="EMBL" id="CP002686">
    <property type="protein sequence ID" value="AEE73814.1"/>
    <property type="molecule type" value="Genomic_DNA"/>
</dbReference>
<dbReference type="EMBL" id="AF428468">
    <property type="protein sequence ID" value="AAL16237.1"/>
    <property type="molecule type" value="mRNA"/>
</dbReference>
<dbReference type="EMBL" id="AY042824">
    <property type="protein sequence ID" value="AAK68764.1"/>
    <property type="molecule type" value="mRNA"/>
</dbReference>
<dbReference type="EMBL" id="AY081446">
    <property type="protein sequence ID" value="AAM10008.1"/>
    <property type="molecule type" value="mRNA"/>
</dbReference>
<dbReference type="EMBL" id="AK316891">
    <property type="protein sequence ID" value="BAH19598.1"/>
    <property type="molecule type" value="mRNA"/>
</dbReference>
<dbReference type="RefSeq" id="NP_001078093.1">
    <property type="nucleotide sequence ID" value="NM_001084624.1"/>
</dbReference>
<dbReference type="RefSeq" id="NP_001154585.1">
    <property type="nucleotide sequence ID" value="NM_001161113.1"/>
</dbReference>
<dbReference type="RefSeq" id="NP_186896.1">
    <property type="nucleotide sequence ID" value="NM_111114.2"/>
</dbReference>
<dbReference type="SMR" id="Q96286"/>
<dbReference type="BioGRID" id="6547">
    <property type="interactions" value="2"/>
</dbReference>
<dbReference type="FunCoup" id="Q96286">
    <property type="interactions" value="2459"/>
</dbReference>
<dbReference type="IntAct" id="Q96286">
    <property type="interactions" value="1"/>
</dbReference>
<dbReference type="STRING" id="3702.Q96286"/>
<dbReference type="PaxDb" id="3702-AT3G02470.1"/>
<dbReference type="ProteomicsDB" id="224680"/>
<dbReference type="EnsemblPlants" id="AT3G02470.1">
    <property type="protein sequence ID" value="AT3G02470.1"/>
    <property type="gene ID" value="AT3G02470"/>
</dbReference>
<dbReference type="EnsemblPlants" id="AT3G02470.3">
    <property type="protein sequence ID" value="AT3G02470.3"/>
    <property type="gene ID" value="AT3G02470"/>
</dbReference>
<dbReference type="EnsemblPlants" id="AT3G02470.4">
    <property type="protein sequence ID" value="AT3G02470.4"/>
    <property type="gene ID" value="AT3G02470"/>
</dbReference>
<dbReference type="GeneID" id="821214"/>
<dbReference type="Gramene" id="AT3G02470.1">
    <property type="protein sequence ID" value="AT3G02470.1"/>
    <property type="gene ID" value="AT3G02470"/>
</dbReference>
<dbReference type="Gramene" id="AT3G02470.3">
    <property type="protein sequence ID" value="AT3G02470.3"/>
    <property type="gene ID" value="AT3G02470"/>
</dbReference>
<dbReference type="Gramene" id="AT3G02470.4">
    <property type="protein sequence ID" value="AT3G02470.4"/>
    <property type="gene ID" value="AT3G02470"/>
</dbReference>
<dbReference type="KEGG" id="ath:AT3G02470"/>
<dbReference type="Araport" id="AT3G02470"/>
<dbReference type="TAIR" id="AT3G02470">
    <property type="gene designation" value="SAMDC"/>
</dbReference>
<dbReference type="eggNOG" id="KOG0788">
    <property type="taxonomic scope" value="Eukaryota"/>
</dbReference>
<dbReference type="HOGENOM" id="CLU_023050_2_1_1"/>
<dbReference type="InParanoid" id="Q96286"/>
<dbReference type="OMA" id="FFKENTC"/>
<dbReference type="OrthoDB" id="1068353at2759"/>
<dbReference type="PhylomeDB" id="Q96286"/>
<dbReference type="BRENDA" id="4.1.1.50">
    <property type="organism ID" value="399"/>
</dbReference>
<dbReference type="SABIO-RK" id="Q96286"/>
<dbReference type="UniPathway" id="UPA00331">
    <property type="reaction ID" value="UER00451"/>
</dbReference>
<dbReference type="PRO" id="PR:Q96286"/>
<dbReference type="Proteomes" id="UP000006548">
    <property type="component" value="Chromosome 3"/>
</dbReference>
<dbReference type="ExpressionAtlas" id="Q96286">
    <property type="expression patterns" value="baseline and differential"/>
</dbReference>
<dbReference type="GO" id="GO:0004014">
    <property type="term" value="F:adenosylmethionine decarboxylase activity"/>
    <property type="evidence" value="ECO:0000314"/>
    <property type="project" value="TAIR"/>
</dbReference>
<dbReference type="GO" id="GO:0099402">
    <property type="term" value="P:plant organ development"/>
    <property type="evidence" value="ECO:0000315"/>
    <property type="project" value="UniProtKB"/>
</dbReference>
<dbReference type="GO" id="GO:0006596">
    <property type="term" value="P:polyamine biosynthetic process"/>
    <property type="evidence" value="ECO:0000304"/>
    <property type="project" value="TAIR"/>
</dbReference>
<dbReference type="GO" id="GO:0008295">
    <property type="term" value="P:spermidine biosynthetic process"/>
    <property type="evidence" value="ECO:0000315"/>
    <property type="project" value="UniProtKB"/>
</dbReference>
<dbReference type="GO" id="GO:0006597">
    <property type="term" value="P:spermine biosynthetic process"/>
    <property type="evidence" value="ECO:0000315"/>
    <property type="project" value="UniProtKB"/>
</dbReference>
<dbReference type="GO" id="GO:0019079">
    <property type="term" value="P:viral genome replication"/>
    <property type="evidence" value="ECO:0000315"/>
    <property type="project" value="TAIR"/>
</dbReference>
<dbReference type="FunFam" id="3.30.360.50:FF:000001">
    <property type="entry name" value="S-adenosylmethionine decarboxylase proenzyme"/>
    <property type="match status" value="1"/>
</dbReference>
<dbReference type="FunFam" id="3.60.90.10:FF:000002">
    <property type="entry name" value="S-adenosylmethionine decarboxylase proenzyme"/>
    <property type="match status" value="1"/>
</dbReference>
<dbReference type="Gene3D" id="3.30.360.50">
    <property type="entry name" value="S-adenosylmethionine decarboxylase"/>
    <property type="match status" value="1"/>
</dbReference>
<dbReference type="Gene3D" id="3.60.90.10">
    <property type="entry name" value="S-adenosylmethionine decarboxylase"/>
    <property type="match status" value="1"/>
</dbReference>
<dbReference type="InterPro" id="IPR048283">
    <property type="entry name" value="AdoMetDC-like"/>
</dbReference>
<dbReference type="InterPro" id="IPR001985">
    <property type="entry name" value="S-AdoMet_decarboxylase_euk"/>
</dbReference>
<dbReference type="InterPro" id="IPR016067">
    <property type="entry name" value="S-AdoMet_deCO2ase_core"/>
</dbReference>
<dbReference type="InterPro" id="IPR018166">
    <property type="entry name" value="S-AdoMet_deCO2ase_CS"/>
</dbReference>
<dbReference type="NCBIfam" id="TIGR00535">
    <property type="entry name" value="SAM_DCase"/>
    <property type="match status" value="1"/>
</dbReference>
<dbReference type="PANTHER" id="PTHR11570">
    <property type="entry name" value="S-ADENOSYLMETHIONINE DECARBOXYLASE"/>
    <property type="match status" value="1"/>
</dbReference>
<dbReference type="PANTHER" id="PTHR11570:SF34">
    <property type="entry name" value="S-ADENOSYLMETHIONINE DECARBOXYLASE PROENZYME 1"/>
    <property type="match status" value="1"/>
</dbReference>
<dbReference type="Pfam" id="PF01536">
    <property type="entry name" value="SAM_decarbox"/>
    <property type="match status" value="1"/>
</dbReference>
<dbReference type="PIRSF" id="PIRSF001355">
    <property type="entry name" value="S-AdenosylMet_decarboxylase"/>
    <property type="match status" value="1"/>
</dbReference>
<dbReference type="SUPFAM" id="SSF56276">
    <property type="entry name" value="S-adenosylmethionine decarboxylase"/>
    <property type="match status" value="1"/>
</dbReference>
<dbReference type="PROSITE" id="PS01336">
    <property type="entry name" value="ADOMETDC"/>
    <property type="match status" value="1"/>
</dbReference>
<name>DCAM1_ARATH</name>
<sequence>MALSAIGFEGYEKRLEVTFFEPSIFQDSKGLGLRALTKSQLDEILTPAACTIVSSLSNDQLDSYVLSESSFFVYPYKVIIKTCGTTKLLLSIPPLLKLAGELSLSVKSVKYTRGSFLCPGGQPFPHRSFSEEVSVLDGHFTQLGLNSVAYLMGNDDETKKWHVYAASAQDSSNCNNNVYTLEMCMTGLDREKAAVFYKDEADKTGSMTDNSGIRKILPKSEICDFEFEPCGYSMNSIEGDAISTIHVTPEDGFSYASFEAVGYDFNTLDLSQLVTRVLSCFEPKQFSVAVHSSVGANSYKPEITVDLEDYGCRERTFESLGEESGTVMYQTFEKLGKYCGSPRSTLKCEWSSNNSCSSEDEKDEGI</sequence>
<feature type="chain" id="PRO_0000029987" description="S-adenosylmethionine decarboxylase 1 beta chain" evidence="1">
    <location>
        <begin position="1"/>
        <end position="68"/>
    </location>
</feature>
<feature type="chain" id="PRO_0000029988" description="S-adenosylmethionine decarboxylase 1 alpha chain" evidence="1">
    <location>
        <begin position="69"/>
        <end position="366"/>
    </location>
</feature>
<feature type="active site" evidence="1">
    <location>
        <position position="9"/>
    </location>
</feature>
<feature type="active site" evidence="1">
    <location>
        <position position="12"/>
    </location>
</feature>
<feature type="active site" description="Schiff-base intermediate with substrate; via pyruvic acid" evidence="1">
    <location>
        <position position="69"/>
    </location>
</feature>
<feature type="active site" description="Proton donor; for catalytic activity" evidence="1">
    <location>
        <position position="83"/>
    </location>
</feature>
<feature type="active site" description="Proton acceptor; for processing activity" evidence="1">
    <location>
        <position position="233"/>
    </location>
</feature>
<feature type="active site" description="Proton acceptor; for processing activity" evidence="1">
    <location>
        <position position="246"/>
    </location>
</feature>
<feature type="binding site" evidence="1">
    <location>
        <position position="68"/>
    </location>
    <ligand>
        <name>substrate</name>
    </ligand>
</feature>
<feature type="binding site" evidence="1">
    <location>
        <position position="250"/>
    </location>
    <ligand>
        <name>substrate</name>
    </ligand>
</feature>
<feature type="site" description="Cleavage (non-hydrolytic); by autolysis" evidence="1">
    <location>
        <begin position="68"/>
        <end position="69"/>
    </location>
</feature>
<feature type="modified residue" description="Pyruvic acid (Ser); by autocatalysis" evidence="1">
    <location>
        <position position="69"/>
    </location>
</feature>
<feature type="mutagenesis site" description="Slightly reduces activity." evidence="2">
    <original>C</original>
    <variation>A</variation>
    <location>
        <position position="50"/>
    </location>
</feature>
<feature type="mutagenesis site" description="Reduces activity 2-fold. Increases substrate specificity for lysine 6-fold." evidence="2">
    <original>K</original>
    <variation>A</variation>
    <location>
        <position position="81"/>
    </location>
</feature>
<feature type="mutagenesis site" description="Reduces activity 10-fold." evidence="2">
    <original>C</original>
    <variation>A</variation>
    <location>
        <position position="83"/>
    </location>
</feature>
<feature type="mutagenesis site" description="Slightly reduces activity." evidence="2">
    <original>C</original>
    <variation>A</variation>
    <location>
        <position position="230"/>
    </location>
</feature>
<feature type="sequence conflict" description="In Ref. 1; CAA69073." evidence="7" ref="1">
    <original>P</original>
    <variation>L</variation>
    <location>
        <position position="123"/>
    </location>
</feature>
<feature type="sequence conflict" description="In Ref. 2; AAB17665." evidence="7" ref="2">
    <original>Y</original>
    <variation>T</variation>
    <location>
        <position position="150"/>
    </location>
</feature>
<feature type="sequence conflict" description="In Ref. 2; AAB17665." evidence="7" ref="2">
    <original>I</original>
    <variation>N</variation>
    <location>
        <position position="216"/>
    </location>
</feature>
<feature type="sequence conflict" description="In Ref. 2; AAB17665." evidence="7" ref="2">
    <original>I</original>
    <variation>N</variation>
    <location>
        <position position="245"/>
    </location>
</feature>
<protein>
    <recommendedName>
        <fullName evidence="7">S-adenosylmethionine decarboxylase proenzyme 1</fullName>
        <shortName evidence="5">AdoMetDC1</shortName>
        <ecNumber evidence="2">4.1.1.50</ecNumber>
    </recommendedName>
    <component>
        <recommendedName>
            <fullName evidence="1">S-adenosylmethionine decarboxylase 1 alpha chain</fullName>
        </recommendedName>
    </component>
    <component>
        <recommendedName>
            <fullName evidence="1">S-adenosylmethionine decarboxylase 1 beta chain</fullName>
        </recommendedName>
    </component>
</protein>